<gene>
    <name evidence="5 7" type="primary">LTV1</name>
    <name evidence="7" type="ORF">CG7686</name>
</gene>
<organism>
    <name type="scientific">Drosophila melanogaster</name>
    <name type="common">Fruit fly</name>
    <dbReference type="NCBI Taxonomy" id="7227"/>
    <lineage>
        <taxon>Eukaryota</taxon>
        <taxon>Metazoa</taxon>
        <taxon>Ecdysozoa</taxon>
        <taxon>Arthropoda</taxon>
        <taxon>Hexapoda</taxon>
        <taxon>Insecta</taxon>
        <taxon>Pterygota</taxon>
        <taxon>Neoptera</taxon>
        <taxon>Endopterygota</taxon>
        <taxon>Diptera</taxon>
        <taxon>Brachycera</taxon>
        <taxon>Muscomorpha</taxon>
        <taxon>Ephydroidea</taxon>
        <taxon>Drosophilidae</taxon>
        <taxon>Drosophila</taxon>
        <taxon>Sophophora</taxon>
    </lineage>
</organism>
<dbReference type="EMBL" id="AE013599">
    <property type="protein sequence ID" value="AAF58742.1"/>
    <property type="molecule type" value="Genomic_DNA"/>
</dbReference>
<dbReference type="EMBL" id="AE013599">
    <property type="protein sequence ID" value="AHN56098.1"/>
    <property type="molecule type" value="Genomic_DNA"/>
</dbReference>
<dbReference type="EMBL" id="AF132172">
    <property type="protein sequence ID" value="AAD34760.1"/>
    <property type="molecule type" value="mRNA"/>
</dbReference>
<dbReference type="RefSeq" id="NP_001286300.1">
    <property type="nucleotide sequence ID" value="NM_001299371.1"/>
</dbReference>
<dbReference type="RefSeq" id="NP_610620.1">
    <property type="nucleotide sequence ID" value="NM_136776.4"/>
</dbReference>
<dbReference type="BioGRID" id="61953">
    <property type="interactions" value="4"/>
</dbReference>
<dbReference type="FunCoup" id="Q7KN79">
    <property type="interactions" value="1398"/>
</dbReference>
<dbReference type="IntAct" id="Q7KN79">
    <property type="interactions" value="1"/>
</dbReference>
<dbReference type="STRING" id="7227.FBpp0308558"/>
<dbReference type="GlyGen" id="Q7KN79">
    <property type="glycosylation" value="1 site"/>
</dbReference>
<dbReference type="iPTMnet" id="Q7KN79"/>
<dbReference type="PaxDb" id="7227-FBpp0087340"/>
<dbReference type="DNASU" id="36146"/>
<dbReference type="EnsemblMetazoa" id="FBtr0088245">
    <property type="protein sequence ID" value="FBpp0087340"/>
    <property type="gene ID" value="FBgn0027525"/>
</dbReference>
<dbReference type="EnsemblMetazoa" id="FBtr0339475">
    <property type="protein sequence ID" value="FBpp0308558"/>
    <property type="gene ID" value="FBgn0027525"/>
</dbReference>
<dbReference type="GeneID" id="36146"/>
<dbReference type="KEGG" id="dme:Dmel_CG7686"/>
<dbReference type="UCSC" id="CG7686-RA">
    <property type="organism name" value="d. melanogaster"/>
</dbReference>
<dbReference type="AGR" id="FB:FBgn0027525"/>
<dbReference type="CTD" id="84946"/>
<dbReference type="FlyBase" id="FBgn0027525">
    <property type="gene designation" value="LTV1"/>
</dbReference>
<dbReference type="VEuPathDB" id="VectorBase:FBgn0027525"/>
<dbReference type="eggNOG" id="KOG2637">
    <property type="taxonomic scope" value="Eukaryota"/>
</dbReference>
<dbReference type="GeneTree" id="ENSGT00390000002789"/>
<dbReference type="HOGENOM" id="CLU_035718_0_0_1"/>
<dbReference type="InParanoid" id="Q7KN79"/>
<dbReference type="OMA" id="TKEFLFM"/>
<dbReference type="OrthoDB" id="5852896at2759"/>
<dbReference type="PhylomeDB" id="Q7KN79"/>
<dbReference type="BioGRID-ORCS" id="36146">
    <property type="hits" value="0 hits in 1 CRISPR screen"/>
</dbReference>
<dbReference type="ChiTaRS" id="CG7686">
    <property type="organism name" value="fly"/>
</dbReference>
<dbReference type="GenomeRNAi" id="36146"/>
<dbReference type="PRO" id="PR:Q7KN79"/>
<dbReference type="Proteomes" id="UP000000803">
    <property type="component" value="Chromosome 2R"/>
</dbReference>
<dbReference type="Bgee" id="FBgn0027525">
    <property type="expression patterns" value="Expressed in adult enteroendocrine precursor cell in adult midgut (Drosophila) and 239 other cell types or tissues"/>
</dbReference>
<dbReference type="GO" id="GO:0005829">
    <property type="term" value="C:cytosol"/>
    <property type="evidence" value="ECO:0000318"/>
    <property type="project" value="GO_Central"/>
</dbReference>
<dbReference type="GO" id="GO:0005634">
    <property type="term" value="C:nucleus"/>
    <property type="evidence" value="ECO:0000318"/>
    <property type="project" value="GO_Central"/>
</dbReference>
<dbReference type="GO" id="GO:0030688">
    <property type="term" value="C:preribosome, small subunit precursor"/>
    <property type="evidence" value="ECO:0000318"/>
    <property type="project" value="GO_Central"/>
</dbReference>
<dbReference type="GO" id="GO:0043022">
    <property type="term" value="F:ribosome binding"/>
    <property type="evidence" value="ECO:0000314"/>
    <property type="project" value="FlyBase"/>
</dbReference>
<dbReference type="GO" id="GO:0042274">
    <property type="term" value="P:ribosomal small subunit biogenesis"/>
    <property type="evidence" value="ECO:0000315"/>
    <property type="project" value="FlyBase"/>
</dbReference>
<dbReference type="GO" id="GO:0000056">
    <property type="term" value="P:ribosomal small subunit export from nucleus"/>
    <property type="evidence" value="ECO:0000315"/>
    <property type="project" value="FlyBase"/>
</dbReference>
<dbReference type="GO" id="GO:0006364">
    <property type="term" value="P:rRNA processing"/>
    <property type="evidence" value="ECO:0000315"/>
    <property type="project" value="FlyBase"/>
</dbReference>
<dbReference type="InterPro" id="IPR007307">
    <property type="entry name" value="Ltv1"/>
</dbReference>
<dbReference type="PANTHER" id="PTHR21531">
    <property type="entry name" value="LOW-TEMPERATURE VIABILITY PROTEIN LTV1-RELATED"/>
    <property type="match status" value="1"/>
</dbReference>
<dbReference type="PANTHER" id="PTHR21531:SF0">
    <property type="entry name" value="PROTEIN LTV1 HOMOLOG"/>
    <property type="match status" value="1"/>
</dbReference>
<dbReference type="Pfam" id="PF04180">
    <property type="entry name" value="LTV"/>
    <property type="match status" value="2"/>
</dbReference>
<proteinExistence type="evidence at protein level"/>
<name>LTV1_DROME</name>
<evidence type="ECO:0000255" key="1"/>
<evidence type="ECO:0000256" key="2">
    <source>
        <dbReference type="SAM" id="MobiDB-lite"/>
    </source>
</evidence>
<evidence type="ECO:0000269" key="3">
    <source>
    </source>
</evidence>
<evidence type="ECO:0000269" key="4">
    <source>
    </source>
</evidence>
<evidence type="ECO:0000303" key="5">
    <source>
    </source>
</evidence>
<evidence type="ECO:0000305" key="6"/>
<evidence type="ECO:0000312" key="7">
    <source>
        <dbReference type="FlyBase" id="FBgn0027525"/>
    </source>
</evidence>
<protein>
    <recommendedName>
        <fullName evidence="5">Protein LTV1 homolog</fullName>
    </recommendedName>
    <alternativeName>
        <fullName evidence="5 7">Low temperature viability protein 1</fullName>
    </alternativeName>
    <alternativeName>
        <fullName evidence="7">Ribosome biogenesis factor LTV1</fullName>
    </alternativeName>
</protein>
<sequence>MVKGKKPYIDRKKAVTFHLVHRSQHDPLVTDENAPQRVLLEAAARQQKPKDPEPPTDPAQRQEELKKFGIHFDDDYDYMQHLKKRENDVVWEFMENPNQARKQKVQDSEKPGPAPKLMLPSSVFASEFEESEGMLNKAAPQTLRLDWDPDVVAALDSDCENEELEDDFVIQAMAEGDSDDEEWDDEDGEEQSDMDFDSDDLNEDENEDELMDRLAPLMRERRFDDEEVKSRFTEYSMSSSVIRRNEQLSLLDDRFEKFYATYDDPELGDLALEDIEGNWHQKHPVVMQCFQEFKKKDKGIEYNKEWDRERIEKYRNVVEGEEDPTEELVEYEVDDPKQKKWDCESILSTYSNIYNHPKVIDEPRRSRRSSASTNPAPIQIDPKTGLPTNVLRGGVDGQLTAKALANLADESPAATGPKSLCAKSVLSTLSVLSIRPKDETHEEKKERKRLLKDYRNERRIEKKANTEAFKEEKKRQTHVKINQRTNQQGASIV</sequence>
<feature type="chain" id="PRO_0000302820" description="Protein LTV1 homolog">
    <location>
        <begin position="1"/>
        <end position="493"/>
    </location>
</feature>
<feature type="region of interest" description="Disordered" evidence="2">
    <location>
        <begin position="42"/>
        <end position="63"/>
    </location>
</feature>
<feature type="region of interest" description="Disordered" evidence="2">
    <location>
        <begin position="97"/>
        <end position="119"/>
    </location>
</feature>
<feature type="region of interest" description="Disordered" evidence="2">
    <location>
        <begin position="170"/>
        <end position="207"/>
    </location>
</feature>
<feature type="region of interest" description="Disordered" evidence="2">
    <location>
        <begin position="359"/>
        <end position="387"/>
    </location>
</feature>
<feature type="region of interest" description="Disordered" evidence="2">
    <location>
        <begin position="465"/>
        <end position="493"/>
    </location>
</feature>
<feature type="coiled-coil region" evidence="1">
    <location>
        <begin position="437"/>
        <end position="468"/>
    </location>
</feature>
<feature type="compositionally biased region" description="Acidic residues" evidence="2">
    <location>
        <begin position="176"/>
        <end position="207"/>
    </location>
</feature>
<feature type="compositionally biased region" description="Basic and acidic residues" evidence="2">
    <location>
        <begin position="465"/>
        <end position="474"/>
    </location>
</feature>
<feature type="compositionally biased region" description="Polar residues" evidence="2">
    <location>
        <begin position="479"/>
        <end position="493"/>
    </location>
</feature>
<feature type="modified residue" description="Phosphoserine" evidence="3">
    <location>
        <position position="345"/>
    </location>
</feature>
<feature type="modified residue" description="Phosphoserine" evidence="3">
    <location>
        <position position="369"/>
    </location>
</feature>
<feature type="modified residue" description="Phosphoserine" evidence="3">
    <location>
        <position position="370"/>
    </location>
</feature>
<feature type="modified residue" description="Phosphoserine" evidence="3">
    <location>
        <position position="424"/>
    </location>
</feature>
<feature type="modified residue" description="Phosphoserine" evidence="3">
    <location>
        <position position="427"/>
    </location>
</feature>
<keyword id="KW-0175">Coiled coil</keyword>
<keyword id="KW-0963">Cytoplasm</keyword>
<keyword id="KW-0597">Phosphoprotein</keyword>
<keyword id="KW-1185">Reference proteome</keyword>
<keyword id="KW-0690">Ribosome biogenesis</keyword>
<accession>Q7KN79</accession>
<accession>A0A0B4LF59</accession>
<reference key="1">
    <citation type="journal article" date="2000" name="Science">
        <title>The genome sequence of Drosophila melanogaster.</title>
        <authorList>
            <person name="Adams M.D."/>
            <person name="Celniker S.E."/>
            <person name="Holt R.A."/>
            <person name="Evans C.A."/>
            <person name="Gocayne J.D."/>
            <person name="Amanatides P.G."/>
            <person name="Scherer S.E."/>
            <person name="Li P.W."/>
            <person name="Hoskins R.A."/>
            <person name="Galle R.F."/>
            <person name="George R.A."/>
            <person name="Lewis S.E."/>
            <person name="Richards S."/>
            <person name="Ashburner M."/>
            <person name="Henderson S.N."/>
            <person name="Sutton G.G."/>
            <person name="Wortman J.R."/>
            <person name="Yandell M.D."/>
            <person name="Zhang Q."/>
            <person name="Chen L.X."/>
            <person name="Brandon R.C."/>
            <person name="Rogers Y.-H.C."/>
            <person name="Blazej R.G."/>
            <person name="Champe M."/>
            <person name="Pfeiffer B.D."/>
            <person name="Wan K.H."/>
            <person name="Doyle C."/>
            <person name="Baxter E.G."/>
            <person name="Helt G."/>
            <person name="Nelson C.R."/>
            <person name="Miklos G.L.G."/>
            <person name="Abril J.F."/>
            <person name="Agbayani A."/>
            <person name="An H.-J."/>
            <person name="Andrews-Pfannkoch C."/>
            <person name="Baldwin D."/>
            <person name="Ballew R.M."/>
            <person name="Basu A."/>
            <person name="Baxendale J."/>
            <person name="Bayraktaroglu L."/>
            <person name="Beasley E.M."/>
            <person name="Beeson K.Y."/>
            <person name="Benos P.V."/>
            <person name="Berman B.P."/>
            <person name="Bhandari D."/>
            <person name="Bolshakov S."/>
            <person name="Borkova D."/>
            <person name="Botchan M.R."/>
            <person name="Bouck J."/>
            <person name="Brokstein P."/>
            <person name="Brottier P."/>
            <person name="Burtis K.C."/>
            <person name="Busam D.A."/>
            <person name="Butler H."/>
            <person name="Cadieu E."/>
            <person name="Center A."/>
            <person name="Chandra I."/>
            <person name="Cherry J.M."/>
            <person name="Cawley S."/>
            <person name="Dahlke C."/>
            <person name="Davenport L.B."/>
            <person name="Davies P."/>
            <person name="de Pablos B."/>
            <person name="Delcher A."/>
            <person name="Deng Z."/>
            <person name="Mays A.D."/>
            <person name="Dew I."/>
            <person name="Dietz S.M."/>
            <person name="Dodson K."/>
            <person name="Doup L.E."/>
            <person name="Downes M."/>
            <person name="Dugan-Rocha S."/>
            <person name="Dunkov B.C."/>
            <person name="Dunn P."/>
            <person name="Durbin K.J."/>
            <person name="Evangelista C.C."/>
            <person name="Ferraz C."/>
            <person name="Ferriera S."/>
            <person name="Fleischmann W."/>
            <person name="Fosler C."/>
            <person name="Gabrielian A.E."/>
            <person name="Garg N.S."/>
            <person name="Gelbart W.M."/>
            <person name="Glasser K."/>
            <person name="Glodek A."/>
            <person name="Gong F."/>
            <person name="Gorrell J.H."/>
            <person name="Gu Z."/>
            <person name="Guan P."/>
            <person name="Harris M."/>
            <person name="Harris N.L."/>
            <person name="Harvey D.A."/>
            <person name="Heiman T.J."/>
            <person name="Hernandez J.R."/>
            <person name="Houck J."/>
            <person name="Hostin D."/>
            <person name="Houston K.A."/>
            <person name="Howland T.J."/>
            <person name="Wei M.-H."/>
            <person name="Ibegwam C."/>
            <person name="Jalali M."/>
            <person name="Kalush F."/>
            <person name="Karpen G.H."/>
            <person name="Ke Z."/>
            <person name="Kennison J.A."/>
            <person name="Ketchum K.A."/>
            <person name="Kimmel B.E."/>
            <person name="Kodira C.D."/>
            <person name="Kraft C.L."/>
            <person name="Kravitz S."/>
            <person name="Kulp D."/>
            <person name="Lai Z."/>
            <person name="Lasko P."/>
            <person name="Lei Y."/>
            <person name="Levitsky A.A."/>
            <person name="Li J.H."/>
            <person name="Li Z."/>
            <person name="Liang Y."/>
            <person name="Lin X."/>
            <person name="Liu X."/>
            <person name="Mattei B."/>
            <person name="McIntosh T.C."/>
            <person name="McLeod M.P."/>
            <person name="McPherson D."/>
            <person name="Merkulov G."/>
            <person name="Milshina N.V."/>
            <person name="Mobarry C."/>
            <person name="Morris J."/>
            <person name="Moshrefi A."/>
            <person name="Mount S.M."/>
            <person name="Moy M."/>
            <person name="Murphy B."/>
            <person name="Murphy L."/>
            <person name="Muzny D.M."/>
            <person name="Nelson D.L."/>
            <person name="Nelson D.R."/>
            <person name="Nelson K.A."/>
            <person name="Nixon K."/>
            <person name="Nusskern D.R."/>
            <person name="Pacleb J.M."/>
            <person name="Palazzolo M."/>
            <person name="Pittman G.S."/>
            <person name="Pan S."/>
            <person name="Pollard J."/>
            <person name="Puri V."/>
            <person name="Reese M.G."/>
            <person name="Reinert K."/>
            <person name="Remington K."/>
            <person name="Saunders R.D.C."/>
            <person name="Scheeler F."/>
            <person name="Shen H."/>
            <person name="Shue B.C."/>
            <person name="Siden-Kiamos I."/>
            <person name="Simpson M."/>
            <person name="Skupski M.P."/>
            <person name="Smith T.J."/>
            <person name="Spier E."/>
            <person name="Spradling A.C."/>
            <person name="Stapleton M."/>
            <person name="Strong R."/>
            <person name="Sun E."/>
            <person name="Svirskas R."/>
            <person name="Tector C."/>
            <person name="Turner R."/>
            <person name="Venter E."/>
            <person name="Wang A.H."/>
            <person name="Wang X."/>
            <person name="Wang Z.-Y."/>
            <person name="Wassarman D.A."/>
            <person name="Weinstock G.M."/>
            <person name="Weissenbach J."/>
            <person name="Williams S.M."/>
            <person name="Woodage T."/>
            <person name="Worley K.C."/>
            <person name="Wu D."/>
            <person name="Yang S."/>
            <person name="Yao Q.A."/>
            <person name="Ye J."/>
            <person name="Yeh R.-F."/>
            <person name="Zaveri J.S."/>
            <person name="Zhan M."/>
            <person name="Zhang G."/>
            <person name="Zhao Q."/>
            <person name="Zheng L."/>
            <person name="Zheng X.H."/>
            <person name="Zhong F.N."/>
            <person name="Zhong W."/>
            <person name="Zhou X."/>
            <person name="Zhu S.C."/>
            <person name="Zhu X."/>
            <person name="Smith H.O."/>
            <person name="Gibbs R.A."/>
            <person name="Myers E.W."/>
            <person name="Rubin G.M."/>
            <person name="Venter J.C."/>
        </authorList>
    </citation>
    <scope>NUCLEOTIDE SEQUENCE [LARGE SCALE GENOMIC DNA]</scope>
    <source>
        <strain>Berkeley</strain>
    </source>
</reference>
<reference key="2">
    <citation type="journal article" date="2002" name="Genome Biol.">
        <title>Annotation of the Drosophila melanogaster euchromatic genome: a systematic review.</title>
        <authorList>
            <person name="Misra S."/>
            <person name="Crosby M.A."/>
            <person name="Mungall C.J."/>
            <person name="Matthews B.B."/>
            <person name="Campbell K.S."/>
            <person name="Hradecky P."/>
            <person name="Huang Y."/>
            <person name="Kaminker J.S."/>
            <person name="Millburn G.H."/>
            <person name="Prochnik S.E."/>
            <person name="Smith C.D."/>
            <person name="Tupy J.L."/>
            <person name="Whitfield E.J."/>
            <person name="Bayraktaroglu L."/>
            <person name="Berman B.P."/>
            <person name="Bettencourt B.R."/>
            <person name="Celniker S.E."/>
            <person name="de Grey A.D.N.J."/>
            <person name="Drysdale R.A."/>
            <person name="Harris N.L."/>
            <person name="Richter J."/>
            <person name="Russo S."/>
            <person name="Schroeder A.J."/>
            <person name="Shu S.Q."/>
            <person name="Stapleton M."/>
            <person name="Yamada C."/>
            <person name="Ashburner M."/>
            <person name="Gelbart W.M."/>
            <person name="Rubin G.M."/>
            <person name="Lewis S.E."/>
        </authorList>
    </citation>
    <scope>GENOME REANNOTATION</scope>
    <source>
        <strain>Berkeley</strain>
    </source>
</reference>
<reference key="3">
    <citation type="journal article" date="2000" name="Science">
        <title>A Drosophila complementary DNA resource.</title>
        <authorList>
            <person name="Rubin G.M."/>
            <person name="Hong L."/>
            <person name="Brokstein P."/>
            <person name="Evans-Holm M."/>
            <person name="Frise E."/>
            <person name="Stapleton M."/>
            <person name="Harvey D.A."/>
        </authorList>
    </citation>
    <scope>NUCLEOTIDE SEQUENCE [LARGE SCALE MRNA]</scope>
    <source>
        <strain>Berkeley</strain>
        <tissue>Embryo</tissue>
    </source>
</reference>
<reference key="4">
    <citation type="journal article" date="2008" name="J. Proteome Res.">
        <title>Phosphoproteome analysis of Drosophila melanogaster embryos.</title>
        <authorList>
            <person name="Zhai B."/>
            <person name="Villen J."/>
            <person name="Beausoleil S.A."/>
            <person name="Mintseris J."/>
            <person name="Gygi S.P."/>
        </authorList>
    </citation>
    <scope>PHOSPHORYLATION [LARGE SCALE ANALYSIS] AT SER-345; SER-369; SER-370; SER-424 AND SER-427</scope>
    <scope>IDENTIFICATION BY MASS SPECTROMETRY</scope>
    <source>
        <tissue>Embryo</tissue>
    </source>
</reference>
<reference key="5">
    <citation type="journal article" date="2015" name="J. Biol. Chem.">
        <title>Drosophila Low Temperature Viability Protein 1 (LTV1) Is Required for Ribosome Biogenesis and Cell Growth Downstream of Drosophila Myc (dMyc).</title>
        <authorList>
            <person name="Kim W."/>
            <person name="Kim H.D."/>
            <person name="Jung Y."/>
            <person name="Kim J."/>
            <person name="Chung J."/>
        </authorList>
    </citation>
    <scope>FUNCTION</scope>
    <scope>INTERACTION WITH RPS3</scope>
    <scope>SUBCELLULAR LOCATION</scope>
    <scope>DEVELOPMENTAL STAGE</scope>
    <scope>DISRUPTION PHENOTYPE</scope>
</reference>
<comment type="function">
    <text evidence="4">Necessary for the biogenesis of 40S ribosome subunits by regulating pre-rRNA processing. Non-ribosomal factor required for efficient nuclear export of the ribosomal 40S subunit. Necessary for endoreplication driven by Myc.</text>
</comment>
<comment type="subunit">
    <text evidence="4">Interacts with RpS3; the interaction is RNA-independent. Associates with free 40S ribosome subunits.</text>
</comment>
<comment type="subcellular location">
    <subcellularLocation>
        <location evidence="4">Cytoplasm</location>
    </subcellularLocation>
</comment>
<comment type="developmental stage">
    <text evidence="4">Expressed in the larval body and salivary glands.</text>
</comment>
<comment type="disruption phenotype">
    <text evidence="4">Lethal at the second larval stage because of defects in pre-rRNA processing. RNAi-mediated knockdown in fat body cells results in accumulation of RpS2 and the pre-40S ribosome in the nucleus and overall decreased cell and nucleus size. RNAi-mediated knockdown in wing imaginal disk results in caspase-dependent cell-death.</text>
</comment>
<comment type="similarity">
    <text evidence="6">Belongs to the LTV1 family.</text>
</comment>